<gene>
    <name evidence="1" type="primary">hldE</name>
    <name type="synonym">waaE</name>
    <name type="ordered locus">C8J_1096</name>
</gene>
<evidence type="ECO:0000255" key="1">
    <source>
        <dbReference type="HAMAP-Rule" id="MF_01603"/>
    </source>
</evidence>
<name>HLDE_CAMJ8</name>
<proteinExistence type="inferred from homology"/>
<comment type="function">
    <text evidence="1">Catalyzes the phosphorylation of D-glycero-D-manno-heptose 7-phosphate at the C-1 position to selectively form D-glycero-beta-D-manno-heptose-1,7-bisphosphate.</text>
</comment>
<comment type="function">
    <text evidence="1">Catalyzes the ADP transfer from ATP to D-glycero-beta-D-manno-heptose 1-phosphate, yielding ADP-D-glycero-beta-D-manno-heptose.</text>
</comment>
<comment type="catalytic activity">
    <reaction evidence="1">
        <text>D-glycero-beta-D-manno-heptose 7-phosphate + ATP = D-glycero-beta-D-manno-heptose 1,7-bisphosphate + ADP + H(+)</text>
        <dbReference type="Rhea" id="RHEA:27473"/>
        <dbReference type="ChEBI" id="CHEBI:15378"/>
        <dbReference type="ChEBI" id="CHEBI:30616"/>
        <dbReference type="ChEBI" id="CHEBI:60204"/>
        <dbReference type="ChEBI" id="CHEBI:60208"/>
        <dbReference type="ChEBI" id="CHEBI:456216"/>
        <dbReference type="EC" id="2.7.1.167"/>
    </reaction>
</comment>
<comment type="catalytic activity">
    <reaction evidence="1">
        <text>D-glycero-beta-D-manno-heptose 1-phosphate + ATP + H(+) = ADP-D-glycero-beta-D-manno-heptose + diphosphate</text>
        <dbReference type="Rhea" id="RHEA:27465"/>
        <dbReference type="ChEBI" id="CHEBI:15378"/>
        <dbReference type="ChEBI" id="CHEBI:30616"/>
        <dbReference type="ChEBI" id="CHEBI:33019"/>
        <dbReference type="ChEBI" id="CHEBI:59967"/>
        <dbReference type="ChEBI" id="CHEBI:61593"/>
        <dbReference type="EC" id="2.7.7.70"/>
    </reaction>
</comment>
<comment type="pathway">
    <text evidence="1">Nucleotide-sugar biosynthesis; ADP-L-glycero-beta-D-manno-heptose biosynthesis; ADP-L-glycero-beta-D-manno-heptose from D-glycero-beta-D-manno-heptose 7-phosphate: step 1/4.</text>
</comment>
<comment type="pathway">
    <text evidence="1">Nucleotide-sugar biosynthesis; ADP-L-glycero-beta-D-manno-heptose biosynthesis; ADP-L-glycero-beta-D-manno-heptose from D-glycero-beta-D-manno-heptose 7-phosphate: step 3/4.</text>
</comment>
<comment type="subunit">
    <text evidence="1">Homodimer.</text>
</comment>
<comment type="similarity">
    <text evidence="1">In the N-terminal section; belongs to the carbohydrate kinase PfkB family.</text>
</comment>
<comment type="similarity">
    <text evidence="1">In the C-terminal section; belongs to the cytidylyltransferase family.</text>
</comment>
<dbReference type="EC" id="2.7.1.167" evidence="1"/>
<dbReference type="EC" id="2.7.7.70" evidence="1"/>
<dbReference type="EMBL" id="CP000814">
    <property type="protein sequence ID" value="ABV52695.1"/>
    <property type="molecule type" value="Genomic_DNA"/>
</dbReference>
<dbReference type="SMR" id="A8FMK8"/>
<dbReference type="KEGG" id="cju:C8J_1096"/>
<dbReference type="HOGENOM" id="CLU_021150_2_1_7"/>
<dbReference type="UniPathway" id="UPA00356">
    <property type="reaction ID" value="UER00437"/>
</dbReference>
<dbReference type="UniPathway" id="UPA00356">
    <property type="reaction ID" value="UER00439"/>
</dbReference>
<dbReference type="GO" id="GO:0005829">
    <property type="term" value="C:cytosol"/>
    <property type="evidence" value="ECO:0007669"/>
    <property type="project" value="TreeGrafter"/>
</dbReference>
<dbReference type="GO" id="GO:0005524">
    <property type="term" value="F:ATP binding"/>
    <property type="evidence" value="ECO:0007669"/>
    <property type="project" value="UniProtKB-UniRule"/>
</dbReference>
<dbReference type="GO" id="GO:0033785">
    <property type="term" value="F:heptose 7-phosphate kinase activity"/>
    <property type="evidence" value="ECO:0007669"/>
    <property type="project" value="UniProtKB-UniRule"/>
</dbReference>
<dbReference type="GO" id="GO:0033786">
    <property type="term" value="F:heptose-1-phosphate adenylyltransferase activity"/>
    <property type="evidence" value="ECO:0007669"/>
    <property type="project" value="UniProtKB-UniRule"/>
</dbReference>
<dbReference type="GO" id="GO:0016773">
    <property type="term" value="F:phosphotransferase activity, alcohol group as acceptor"/>
    <property type="evidence" value="ECO:0007669"/>
    <property type="project" value="InterPro"/>
</dbReference>
<dbReference type="GO" id="GO:0097171">
    <property type="term" value="P:ADP-L-glycero-beta-D-manno-heptose biosynthetic process"/>
    <property type="evidence" value="ECO:0007669"/>
    <property type="project" value="UniProtKB-UniPathway"/>
</dbReference>
<dbReference type="CDD" id="cd01172">
    <property type="entry name" value="RfaE_like"/>
    <property type="match status" value="1"/>
</dbReference>
<dbReference type="FunFam" id="3.40.1190.20:FF:000084">
    <property type="entry name" value="Bifunctional protein HldE"/>
    <property type="match status" value="1"/>
</dbReference>
<dbReference type="FunFam" id="3.40.50.620:FF:000282">
    <property type="entry name" value="Bifunctional protein HldE"/>
    <property type="match status" value="1"/>
</dbReference>
<dbReference type="Gene3D" id="3.40.1190.20">
    <property type="match status" value="1"/>
</dbReference>
<dbReference type="Gene3D" id="3.40.50.620">
    <property type="entry name" value="HUPs"/>
    <property type="match status" value="1"/>
</dbReference>
<dbReference type="HAMAP" id="MF_01603">
    <property type="entry name" value="HldE"/>
    <property type="match status" value="1"/>
</dbReference>
<dbReference type="InterPro" id="IPR023030">
    <property type="entry name" value="Bifunc_HldE"/>
</dbReference>
<dbReference type="InterPro" id="IPR004821">
    <property type="entry name" value="Cyt_trans-like"/>
</dbReference>
<dbReference type="InterPro" id="IPR011611">
    <property type="entry name" value="PfkB_dom"/>
</dbReference>
<dbReference type="InterPro" id="IPR011913">
    <property type="entry name" value="RfaE_dom_I"/>
</dbReference>
<dbReference type="InterPro" id="IPR011914">
    <property type="entry name" value="RfaE_dom_II"/>
</dbReference>
<dbReference type="InterPro" id="IPR029056">
    <property type="entry name" value="Ribokinase-like"/>
</dbReference>
<dbReference type="InterPro" id="IPR014729">
    <property type="entry name" value="Rossmann-like_a/b/a_fold"/>
</dbReference>
<dbReference type="NCBIfam" id="TIGR00125">
    <property type="entry name" value="cyt_tran_rel"/>
    <property type="match status" value="1"/>
</dbReference>
<dbReference type="NCBIfam" id="TIGR02198">
    <property type="entry name" value="rfaE_dom_I"/>
    <property type="match status" value="1"/>
</dbReference>
<dbReference type="NCBIfam" id="TIGR02199">
    <property type="entry name" value="rfaE_dom_II"/>
    <property type="match status" value="1"/>
</dbReference>
<dbReference type="PANTHER" id="PTHR46969">
    <property type="entry name" value="BIFUNCTIONAL PROTEIN HLDE"/>
    <property type="match status" value="1"/>
</dbReference>
<dbReference type="PANTHER" id="PTHR46969:SF1">
    <property type="entry name" value="BIFUNCTIONAL PROTEIN HLDE"/>
    <property type="match status" value="1"/>
</dbReference>
<dbReference type="Pfam" id="PF01467">
    <property type="entry name" value="CTP_transf_like"/>
    <property type="match status" value="1"/>
</dbReference>
<dbReference type="Pfam" id="PF00294">
    <property type="entry name" value="PfkB"/>
    <property type="match status" value="1"/>
</dbReference>
<dbReference type="SUPFAM" id="SSF52374">
    <property type="entry name" value="Nucleotidylyl transferase"/>
    <property type="match status" value="1"/>
</dbReference>
<dbReference type="SUPFAM" id="SSF53613">
    <property type="entry name" value="Ribokinase-like"/>
    <property type="match status" value="1"/>
</dbReference>
<feature type="chain" id="PRO_0000323483" description="Bifunctional protein HldE">
    <location>
        <begin position="1"/>
        <end position="461"/>
    </location>
</feature>
<feature type="region of interest" description="Ribokinase">
    <location>
        <begin position="1"/>
        <end position="312"/>
    </location>
</feature>
<feature type="region of interest" description="Cytidylyltransferase">
    <location>
        <begin position="334"/>
        <end position="461"/>
    </location>
</feature>
<feature type="active site" evidence="1">
    <location>
        <position position="259"/>
    </location>
</feature>
<feature type="binding site" evidence="1">
    <location>
        <begin position="191"/>
        <end position="194"/>
    </location>
    <ligand>
        <name>ATP</name>
        <dbReference type="ChEBI" id="CHEBI:30616"/>
    </ligand>
</feature>
<organism>
    <name type="scientific">Campylobacter jejuni subsp. jejuni serotype O:6 (strain 81116 / NCTC 11828)</name>
    <dbReference type="NCBI Taxonomy" id="407148"/>
    <lineage>
        <taxon>Bacteria</taxon>
        <taxon>Pseudomonadati</taxon>
        <taxon>Campylobacterota</taxon>
        <taxon>Epsilonproteobacteria</taxon>
        <taxon>Campylobacterales</taxon>
        <taxon>Campylobacteraceae</taxon>
        <taxon>Campylobacter</taxon>
    </lineage>
</organism>
<reference key="1">
    <citation type="journal article" date="2007" name="J. Bacteriol.">
        <title>The complete genome sequence of Campylobacter jejuni strain 81116 (NCTC11828).</title>
        <authorList>
            <person name="Pearson B.M."/>
            <person name="Gaskin D.J.H."/>
            <person name="Segers R.P.A.M."/>
            <person name="Wells J.M."/>
            <person name="Nuijten P.J.M."/>
            <person name="van Vliet A.H.M."/>
        </authorList>
    </citation>
    <scope>NUCLEOTIDE SEQUENCE [LARGE SCALE GENOMIC DNA]</scope>
    <source>
        <strain>81116 / NCTC 11828</strain>
    </source>
</reference>
<protein>
    <recommendedName>
        <fullName evidence="1">Bifunctional protein HldE</fullName>
    </recommendedName>
    <domain>
        <recommendedName>
            <fullName evidence="1">D-beta-D-heptose 7-phosphate kinase</fullName>
            <ecNumber evidence="1">2.7.1.167</ecNumber>
        </recommendedName>
        <alternativeName>
            <fullName evidence="1">D-beta-D-heptose 7-phosphotransferase</fullName>
        </alternativeName>
        <alternativeName>
            <fullName evidence="1">D-glycero-beta-D-manno-heptose-7-phosphate kinase</fullName>
        </alternativeName>
    </domain>
    <domain>
        <recommendedName>
            <fullName evidence="1">D-beta-D-heptose 1-phosphate adenylyltransferase</fullName>
            <ecNumber evidence="1">2.7.7.70</ecNumber>
        </recommendedName>
        <alternativeName>
            <fullName evidence="1">D-glycero-beta-D-manno-heptose 1-phosphate adenylyltransferase</fullName>
        </alternativeName>
    </domain>
</protein>
<accession>A8FMK8</accession>
<sequence>MLEFLSQQKPKILIIGDFMVDNYTWCDCSRISPEAPVLVAKTLKEDKRLGGAANVYANLKSLGADVFALGVVGDDKSGKFLQENLKGEFLIQKGRKTPFKNRIMAHNQQVLRLDEEDISAILLENELIALFDEKIKDFKAVVLSDYAKGVLTPKVCKAVIKKAKALNIPVLVDPKGSDFSKYSGATLLTPNKKEALEALKFENLEGENLEKGIKKLKEDFALRYSIITLSEAGIALFDEGLKIAPAKALEVYDVTGAGDSVIAVLAFCLASGIEIFKACELANEAAAVVVSKIGSMSVSFDEIKSFNRVDFEKKIKSKEELLTLLKQNDKKIVFTNGCFDIVHFGHIKYLEKAKRLGDVLIVGLNSDASVKRLKGESRPVNSEFQRACMLAAFYFVDFVVIFDEDTPLELISFLKPDILIKGADYKDKLVVGADIVSKVELIDFEEGFSTSKIIEKIKDKK</sequence>
<keyword id="KW-0067">ATP-binding</keyword>
<keyword id="KW-0119">Carbohydrate metabolism</keyword>
<keyword id="KW-0418">Kinase</keyword>
<keyword id="KW-0511">Multifunctional enzyme</keyword>
<keyword id="KW-0547">Nucleotide-binding</keyword>
<keyword id="KW-0548">Nucleotidyltransferase</keyword>
<keyword id="KW-0808">Transferase</keyword>